<feature type="chain" id="PRO_1000055146" description="ATP synthase subunit beta">
    <location>
        <begin position="1"/>
        <end position="458"/>
    </location>
</feature>
<feature type="binding site" evidence="1">
    <location>
        <begin position="148"/>
        <end position="155"/>
    </location>
    <ligand>
        <name>ATP</name>
        <dbReference type="ChEBI" id="CHEBI:30616"/>
    </ligand>
</feature>
<dbReference type="EC" id="7.1.2.2" evidence="1"/>
<dbReference type="EMBL" id="CP000438">
    <property type="protein sequence ID" value="ABJ14941.1"/>
    <property type="molecule type" value="Genomic_DNA"/>
</dbReference>
<dbReference type="RefSeq" id="WP_003097130.1">
    <property type="nucleotide sequence ID" value="NZ_CP034244.1"/>
</dbReference>
<dbReference type="SMR" id="Q02DF4"/>
<dbReference type="GeneID" id="77224107"/>
<dbReference type="KEGG" id="pau:PA14_73240"/>
<dbReference type="PseudoCAP" id="PA14_73240"/>
<dbReference type="HOGENOM" id="CLU_022398_0_2_6"/>
<dbReference type="BioCyc" id="PAER208963:G1G74-6161-MONOMER"/>
<dbReference type="Proteomes" id="UP000000653">
    <property type="component" value="Chromosome"/>
</dbReference>
<dbReference type="GO" id="GO:0005886">
    <property type="term" value="C:plasma membrane"/>
    <property type="evidence" value="ECO:0007669"/>
    <property type="project" value="UniProtKB-SubCell"/>
</dbReference>
<dbReference type="GO" id="GO:0045259">
    <property type="term" value="C:proton-transporting ATP synthase complex"/>
    <property type="evidence" value="ECO:0007669"/>
    <property type="project" value="UniProtKB-KW"/>
</dbReference>
<dbReference type="GO" id="GO:0005524">
    <property type="term" value="F:ATP binding"/>
    <property type="evidence" value="ECO:0007669"/>
    <property type="project" value="UniProtKB-UniRule"/>
</dbReference>
<dbReference type="GO" id="GO:0016887">
    <property type="term" value="F:ATP hydrolysis activity"/>
    <property type="evidence" value="ECO:0007669"/>
    <property type="project" value="InterPro"/>
</dbReference>
<dbReference type="GO" id="GO:0046933">
    <property type="term" value="F:proton-transporting ATP synthase activity, rotational mechanism"/>
    <property type="evidence" value="ECO:0007669"/>
    <property type="project" value="UniProtKB-UniRule"/>
</dbReference>
<dbReference type="CDD" id="cd18110">
    <property type="entry name" value="ATP-synt_F1_beta_C"/>
    <property type="match status" value="1"/>
</dbReference>
<dbReference type="CDD" id="cd18115">
    <property type="entry name" value="ATP-synt_F1_beta_N"/>
    <property type="match status" value="1"/>
</dbReference>
<dbReference type="CDD" id="cd01133">
    <property type="entry name" value="F1-ATPase_beta_CD"/>
    <property type="match status" value="1"/>
</dbReference>
<dbReference type="FunFam" id="1.10.1140.10:FF:000001">
    <property type="entry name" value="ATP synthase subunit beta"/>
    <property type="match status" value="1"/>
</dbReference>
<dbReference type="FunFam" id="3.40.50.300:FF:000004">
    <property type="entry name" value="ATP synthase subunit beta"/>
    <property type="match status" value="1"/>
</dbReference>
<dbReference type="Gene3D" id="2.40.10.170">
    <property type="match status" value="1"/>
</dbReference>
<dbReference type="Gene3D" id="1.10.1140.10">
    <property type="entry name" value="Bovine Mitochondrial F1-atpase, Atp Synthase Beta Chain, Chain D, domain 3"/>
    <property type="match status" value="1"/>
</dbReference>
<dbReference type="Gene3D" id="3.40.50.300">
    <property type="entry name" value="P-loop containing nucleotide triphosphate hydrolases"/>
    <property type="match status" value="1"/>
</dbReference>
<dbReference type="HAMAP" id="MF_01347">
    <property type="entry name" value="ATP_synth_beta_bact"/>
    <property type="match status" value="1"/>
</dbReference>
<dbReference type="InterPro" id="IPR003593">
    <property type="entry name" value="AAA+_ATPase"/>
</dbReference>
<dbReference type="InterPro" id="IPR055190">
    <property type="entry name" value="ATP-synt_VA_C"/>
</dbReference>
<dbReference type="InterPro" id="IPR005722">
    <property type="entry name" value="ATP_synth_F1_bsu"/>
</dbReference>
<dbReference type="InterPro" id="IPR020003">
    <property type="entry name" value="ATPase_a/bsu_AS"/>
</dbReference>
<dbReference type="InterPro" id="IPR050053">
    <property type="entry name" value="ATPase_alpha/beta_chains"/>
</dbReference>
<dbReference type="InterPro" id="IPR004100">
    <property type="entry name" value="ATPase_F1/V1/A1_a/bsu_N"/>
</dbReference>
<dbReference type="InterPro" id="IPR036121">
    <property type="entry name" value="ATPase_F1/V1/A1_a/bsu_N_sf"/>
</dbReference>
<dbReference type="InterPro" id="IPR000194">
    <property type="entry name" value="ATPase_F1/V1/A1_a/bsu_nucl-bd"/>
</dbReference>
<dbReference type="InterPro" id="IPR024034">
    <property type="entry name" value="ATPase_F1/V1_b/a_C"/>
</dbReference>
<dbReference type="InterPro" id="IPR027417">
    <property type="entry name" value="P-loop_NTPase"/>
</dbReference>
<dbReference type="NCBIfam" id="TIGR01039">
    <property type="entry name" value="atpD"/>
    <property type="match status" value="1"/>
</dbReference>
<dbReference type="PANTHER" id="PTHR15184">
    <property type="entry name" value="ATP SYNTHASE"/>
    <property type="match status" value="1"/>
</dbReference>
<dbReference type="PANTHER" id="PTHR15184:SF71">
    <property type="entry name" value="ATP SYNTHASE SUBUNIT BETA, MITOCHONDRIAL"/>
    <property type="match status" value="1"/>
</dbReference>
<dbReference type="Pfam" id="PF00006">
    <property type="entry name" value="ATP-synt_ab"/>
    <property type="match status" value="1"/>
</dbReference>
<dbReference type="Pfam" id="PF02874">
    <property type="entry name" value="ATP-synt_ab_N"/>
    <property type="match status" value="1"/>
</dbReference>
<dbReference type="Pfam" id="PF22919">
    <property type="entry name" value="ATP-synt_VA_C"/>
    <property type="match status" value="1"/>
</dbReference>
<dbReference type="SMART" id="SM00382">
    <property type="entry name" value="AAA"/>
    <property type="match status" value="1"/>
</dbReference>
<dbReference type="SUPFAM" id="SSF47917">
    <property type="entry name" value="C-terminal domain of alpha and beta subunits of F1 ATP synthase"/>
    <property type="match status" value="1"/>
</dbReference>
<dbReference type="SUPFAM" id="SSF50615">
    <property type="entry name" value="N-terminal domain of alpha and beta subunits of F1 ATP synthase"/>
    <property type="match status" value="1"/>
</dbReference>
<dbReference type="SUPFAM" id="SSF52540">
    <property type="entry name" value="P-loop containing nucleoside triphosphate hydrolases"/>
    <property type="match status" value="1"/>
</dbReference>
<dbReference type="PROSITE" id="PS00152">
    <property type="entry name" value="ATPASE_ALPHA_BETA"/>
    <property type="match status" value="1"/>
</dbReference>
<reference key="1">
    <citation type="journal article" date="2006" name="Genome Biol.">
        <title>Genomic analysis reveals that Pseudomonas aeruginosa virulence is combinatorial.</title>
        <authorList>
            <person name="Lee D.G."/>
            <person name="Urbach J.M."/>
            <person name="Wu G."/>
            <person name="Liberati N.T."/>
            <person name="Feinbaum R.L."/>
            <person name="Miyata S."/>
            <person name="Diggins L.T."/>
            <person name="He J."/>
            <person name="Saucier M."/>
            <person name="Deziel E."/>
            <person name="Friedman L."/>
            <person name="Li L."/>
            <person name="Grills G."/>
            <person name="Montgomery K."/>
            <person name="Kucherlapati R."/>
            <person name="Rahme L.G."/>
            <person name="Ausubel F.M."/>
        </authorList>
    </citation>
    <scope>NUCLEOTIDE SEQUENCE [LARGE SCALE GENOMIC DNA]</scope>
    <source>
        <strain>UCBPP-PA14</strain>
    </source>
</reference>
<sequence>MSSGRIVQIIGAVIDVEFPRDAVPSIYEALKVQGVETTLEVQQQLGDGVVRSIAMGSTEGLKRGLNVDSTGAAISVPVGKATLGRIMDVLGNPIDEAGPIGEEERWGIHREAPSYADQAGGNELLETGIKVIDLVCPFAKGGKVGLFGGAGVGKTVNMMELIRNIAIEHSGYSVFAGVGERTREGNDFYHEMKDSNVLDKVALVYGQMNEPPGNRLRVALTGLTMAEKFRDEGRDVLLFIDNIYRYTLAGTEVSALLGRMPSAVGYQPTLAEEMGVLQERITSTKKGSITSIQAVYVPADDLTDPSPATTFAHLDATVVLSRDIASLGIYPAVDPLDSTSRQLDPLVIGQDHYDTARGVQYVLQRYKELKDIIAILGMDELSEADKLLVARARKIQRFLSQPFFVAEVFTGSPGKYVSLKDTIAGFKGILNGDYDHLPEQAFYMVGGIEEAVEKAKKL</sequence>
<protein>
    <recommendedName>
        <fullName evidence="1">ATP synthase subunit beta</fullName>
        <ecNumber evidence="1">7.1.2.2</ecNumber>
    </recommendedName>
    <alternativeName>
        <fullName evidence="1">ATP synthase F1 sector subunit beta</fullName>
    </alternativeName>
    <alternativeName>
        <fullName evidence="1">F-ATPase subunit beta</fullName>
    </alternativeName>
</protein>
<keyword id="KW-0066">ATP synthesis</keyword>
<keyword id="KW-0067">ATP-binding</keyword>
<keyword id="KW-0997">Cell inner membrane</keyword>
<keyword id="KW-1003">Cell membrane</keyword>
<keyword id="KW-0139">CF(1)</keyword>
<keyword id="KW-0375">Hydrogen ion transport</keyword>
<keyword id="KW-0406">Ion transport</keyword>
<keyword id="KW-0472">Membrane</keyword>
<keyword id="KW-0547">Nucleotide-binding</keyword>
<keyword id="KW-1278">Translocase</keyword>
<keyword id="KW-0813">Transport</keyword>
<proteinExistence type="inferred from homology"/>
<name>ATPB_PSEAB</name>
<accession>Q02DF4</accession>
<evidence type="ECO:0000255" key="1">
    <source>
        <dbReference type="HAMAP-Rule" id="MF_01347"/>
    </source>
</evidence>
<comment type="function">
    <text evidence="1">Produces ATP from ADP in the presence of a proton gradient across the membrane. The catalytic sites are hosted primarily by the beta subunits.</text>
</comment>
<comment type="catalytic activity">
    <reaction evidence="1">
        <text>ATP + H2O + 4 H(+)(in) = ADP + phosphate + 5 H(+)(out)</text>
        <dbReference type="Rhea" id="RHEA:57720"/>
        <dbReference type="ChEBI" id="CHEBI:15377"/>
        <dbReference type="ChEBI" id="CHEBI:15378"/>
        <dbReference type="ChEBI" id="CHEBI:30616"/>
        <dbReference type="ChEBI" id="CHEBI:43474"/>
        <dbReference type="ChEBI" id="CHEBI:456216"/>
        <dbReference type="EC" id="7.1.2.2"/>
    </reaction>
</comment>
<comment type="subunit">
    <text evidence="1">F-type ATPases have 2 components, CF(1) - the catalytic core - and CF(0) - the membrane proton channel. CF(1) has five subunits: alpha(3), beta(3), gamma(1), delta(1), epsilon(1). CF(0) has three main subunits: a(1), b(2) and c(9-12). The alpha and beta chains form an alternating ring which encloses part of the gamma chain. CF(1) is attached to CF(0) by a central stalk formed by the gamma and epsilon chains, while a peripheral stalk is formed by the delta and b chains.</text>
</comment>
<comment type="subcellular location">
    <subcellularLocation>
        <location evidence="1">Cell inner membrane</location>
        <topology evidence="1">Peripheral membrane protein</topology>
    </subcellularLocation>
</comment>
<comment type="similarity">
    <text evidence="1">Belongs to the ATPase alpha/beta chains family.</text>
</comment>
<gene>
    <name evidence="1" type="primary">atpD</name>
    <name type="ordered locus">PA14_73240</name>
</gene>
<organism>
    <name type="scientific">Pseudomonas aeruginosa (strain UCBPP-PA14)</name>
    <dbReference type="NCBI Taxonomy" id="208963"/>
    <lineage>
        <taxon>Bacteria</taxon>
        <taxon>Pseudomonadati</taxon>
        <taxon>Pseudomonadota</taxon>
        <taxon>Gammaproteobacteria</taxon>
        <taxon>Pseudomonadales</taxon>
        <taxon>Pseudomonadaceae</taxon>
        <taxon>Pseudomonas</taxon>
    </lineage>
</organism>